<reference key="1">
    <citation type="journal article" date="2005" name="J. Bacteriol.">
        <title>Two additional components of the accessory sec system mediating export of the Streptococcus gordonii platelet-binding protein GspB.</title>
        <authorList>
            <person name="Takamatsu D."/>
            <person name="Bensing B.A."/>
            <person name="Sullam P.M."/>
        </authorList>
    </citation>
    <scope>NUCLEOTIDE SEQUENCE [GENOMIC DNA]</scope>
    <scope>FUNCTION</scope>
    <scope>DISRUPTION PHENOTYPE</scope>
    <source>
        <strain>M99</strain>
    </source>
</reference>
<sequence length="73" mass="8492">MQKLLLILTILLALILITLVISLPRENQQFFSETRSTIGKSGYWETNFFKKIILLIVSILLFLTLIFYMIQTA</sequence>
<organism>
    <name type="scientific">Streptococcus gordonii</name>
    <dbReference type="NCBI Taxonomy" id="1302"/>
    <lineage>
        <taxon>Bacteria</taxon>
        <taxon>Bacillati</taxon>
        <taxon>Bacillota</taxon>
        <taxon>Bacilli</taxon>
        <taxon>Lactobacillales</taxon>
        <taxon>Streptococcaceae</taxon>
        <taxon>Streptococcus</taxon>
    </lineage>
</organism>
<protein>
    <recommendedName>
        <fullName>Accessory secretory protein Asp5</fullName>
    </recommendedName>
    <alternativeName>
        <fullName>Orf6</fullName>
    </alternativeName>
</protein>
<comment type="function">
    <text evidence="2">Part of the accessory SecA2/SecY2 system specifically required to export GspB, a serine-rich repeat cell wall protein encoded upstream in the same operon.</text>
</comment>
<comment type="subunit">
    <text>Part of the accessory SecA2/SecY2 protein translocation apparatus required to export cell wall protein GspB.</text>
</comment>
<comment type="subcellular location">
    <subcellularLocation>
        <location evidence="3">Cell membrane</location>
        <topology evidence="3">Single-pass membrane protein</topology>
    </subcellularLocation>
</comment>
<comment type="disruption phenotype">
    <text evidence="2">No export of mature cell wall protein GspB, a small amount of unprocessed protein is exported to the cell wall while the rest accumulates intracellularly, probably in a glycosylated form. Cells bind less well to platelets.</text>
</comment>
<accession>Q4L2X2</accession>
<gene>
    <name type="primary">asp5</name>
</gene>
<keyword id="KW-1003">Cell membrane</keyword>
<keyword id="KW-0472">Membrane</keyword>
<keyword id="KW-0653">Protein transport</keyword>
<keyword id="KW-0732">Signal</keyword>
<keyword id="KW-0811">Translocation</keyword>
<keyword id="KW-0812">Transmembrane</keyword>
<keyword id="KW-1133">Transmembrane helix</keyword>
<keyword id="KW-0813">Transport</keyword>
<name>ASP5_STRGN</name>
<evidence type="ECO:0000255" key="1"/>
<evidence type="ECO:0000269" key="2">
    <source>
    </source>
</evidence>
<evidence type="ECO:0000305" key="3"/>
<dbReference type="EMBL" id="AY028381">
    <property type="protein sequence ID" value="AAY99444.1"/>
    <property type="molecule type" value="Genomic_DNA"/>
</dbReference>
<dbReference type="RefSeq" id="WP_045634941.1">
    <property type="nucleotide sequence ID" value="NZ_CP012648.1"/>
</dbReference>
<dbReference type="SMR" id="Q4L2X2"/>
<dbReference type="GO" id="GO:0005886">
    <property type="term" value="C:plasma membrane"/>
    <property type="evidence" value="ECO:0007669"/>
    <property type="project" value="UniProtKB-SubCell"/>
</dbReference>
<dbReference type="GO" id="GO:0015031">
    <property type="term" value="P:protein transport"/>
    <property type="evidence" value="ECO:0007669"/>
    <property type="project" value="UniProtKB-KW"/>
</dbReference>
<dbReference type="InterPro" id="IPR031548">
    <property type="entry name" value="Asp5"/>
</dbReference>
<dbReference type="Pfam" id="PF17000">
    <property type="entry name" value="Asp5"/>
    <property type="match status" value="1"/>
</dbReference>
<proteinExistence type="inferred from homology"/>
<feature type="signal peptide" evidence="1">
    <location>
        <begin position="1"/>
        <end position="30"/>
    </location>
</feature>
<feature type="chain" id="PRO_0000414202" description="Accessory secretory protein Asp5">
    <location>
        <begin position="31"/>
        <end position="73"/>
    </location>
</feature>
<feature type="transmembrane region" description="Helical" evidence="1">
    <location>
        <begin position="52"/>
        <end position="72"/>
    </location>
</feature>